<proteinExistence type="evidence at transcript level"/>
<evidence type="ECO:0000256" key="1">
    <source>
        <dbReference type="SAM" id="MobiDB-lite"/>
    </source>
</evidence>
<accession>Q9SA16</accession>
<reference key="1">
    <citation type="journal article" date="2000" name="Nature">
        <title>Sequence and analysis of chromosome 1 of the plant Arabidopsis thaliana.</title>
        <authorList>
            <person name="Theologis A."/>
            <person name="Ecker J.R."/>
            <person name="Palm C.J."/>
            <person name="Federspiel N.A."/>
            <person name="Kaul S."/>
            <person name="White O."/>
            <person name="Alonso J."/>
            <person name="Altafi H."/>
            <person name="Araujo R."/>
            <person name="Bowman C.L."/>
            <person name="Brooks S.Y."/>
            <person name="Buehler E."/>
            <person name="Chan A."/>
            <person name="Chao Q."/>
            <person name="Chen H."/>
            <person name="Cheuk R.F."/>
            <person name="Chin C.W."/>
            <person name="Chung M.K."/>
            <person name="Conn L."/>
            <person name="Conway A.B."/>
            <person name="Conway A.R."/>
            <person name="Creasy T.H."/>
            <person name="Dewar K."/>
            <person name="Dunn P."/>
            <person name="Etgu P."/>
            <person name="Feldblyum T.V."/>
            <person name="Feng J.-D."/>
            <person name="Fong B."/>
            <person name="Fujii C.Y."/>
            <person name="Gill J.E."/>
            <person name="Goldsmith A.D."/>
            <person name="Haas B."/>
            <person name="Hansen N.F."/>
            <person name="Hughes B."/>
            <person name="Huizar L."/>
            <person name="Hunter J.L."/>
            <person name="Jenkins J."/>
            <person name="Johnson-Hopson C."/>
            <person name="Khan S."/>
            <person name="Khaykin E."/>
            <person name="Kim C.J."/>
            <person name="Koo H.L."/>
            <person name="Kremenetskaia I."/>
            <person name="Kurtz D.B."/>
            <person name="Kwan A."/>
            <person name="Lam B."/>
            <person name="Langin-Hooper S."/>
            <person name="Lee A."/>
            <person name="Lee J.M."/>
            <person name="Lenz C.A."/>
            <person name="Li J.H."/>
            <person name="Li Y.-P."/>
            <person name="Lin X."/>
            <person name="Liu S.X."/>
            <person name="Liu Z.A."/>
            <person name="Luros J.S."/>
            <person name="Maiti R."/>
            <person name="Marziali A."/>
            <person name="Militscher J."/>
            <person name="Miranda M."/>
            <person name="Nguyen M."/>
            <person name="Nierman W.C."/>
            <person name="Osborne B.I."/>
            <person name="Pai G."/>
            <person name="Peterson J."/>
            <person name="Pham P.K."/>
            <person name="Rizzo M."/>
            <person name="Rooney T."/>
            <person name="Rowley D."/>
            <person name="Sakano H."/>
            <person name="Salzberg S.L."/>
            <person name="Schwartz J.R."/>
            <person name="Shinn P."/>
            <person name="Southwick A.M."/>
            <person name="Sun H."/>
            <person name="Tallon L.J."/>
            <person name="Tambunga G."/>
            <person name="Toriumi M.J."/>
            <person name="Town C.D."/>
            <person name="Utterback T."/>
            <person name="Van Aken S."/>
            <person name="Vaysberg M."/>
            <person name="Vysotskaia V.S."/>
            <person name="Walker M."/>
            <person name="Wu D."/>
            <person name="Yu G."/>
            <person name="Fraser C.M."/>
            <person name="Venter J.C."/>
            <person name="Davis R.W."/>
        </authorList>
    </citation>
    <scope>NUCLEOTIDE SEQUENCE [LARGE SCALE GENOMIC DNA]</scope>
    <source>
        <strain>cv. Columbia</strain>
    </source>
</reference>
<reference key="2">
    <citation type="journal article" date="2017" name="Plant J.">
        <title>Araport11: a complete reannotation of the Arabidopsis thaliana reference genome.</title>
        <authorList>
            <person name="Cheng C.Y."/>
            <person name="Krishnakumar V."/>
            <person name="Chan A.P."/>
            <person name="Thibaud-Nissen F."/>
            <person name="Schobel S."/>
            <person name="Town C.D."/>
        </authorList>
    </citation>
    <scope>GENOME REANNOTATION</scope>
    <source>
        <strain>cv. Columbia</strain>
    </source>
</reference>
<reference key="3">
    <citation type="journal article" date="2003" name="Plant Physiol.">
        <title>Diversity of the superfamily of phloem lectins (phloem protein 2) in angiosperms.</title>
        <authorList>
            <person name="Dinant S."/>
            <person name="Clark A.M."/>
            <person name="Zhu Y."/>
            <person name="Vilaine F."/>
            <person name="Palauqui J.-C."/>
            <person name="Kusiak C."/>
            <person name="Thompson G.A."/>
        </authorList>
    </citation>
    <scope>GENE FAMILY</scope>
    <scope>NOMENCLATURE</scope>
</reference>
<keyword id="KW-1185">Reference proteome</keyword>
<organism>
    <name type="scientific">Arabidopsis thaliana</name>
    <name type="common">Mouse-ear cress</name>
    <dbReference type="NCBI Taxonomy" id="3702"/>
    <lineage>
        <taxon>Eukaryota</taxon>
        <taxon>Viridiplantae</taxon>
        <taxon>Streptophyta</taxon>
        <taxon>Embryophyta</taxon>
        <taxon>Tracheophyta</taxon>
        <taxon>Spermatophyta</taxon>
        <taxon>Magnoliopsida</taxon>
        <taxon>eudicotyledons</taxon>
        <taxon>Gunneridae</taxon>
        <taxon>Pentapetalae</taxon>
        <taxon>rosids</taxon>
        <taxon>malvids</taxon>
        <taxon>Brassicales</taxon>
        <taxon>Brassicaceae</taxon>
        <taxon>Camelineae</taxon>
        <taxon>Arabidopsis</taxon>
    </lineage>
</organism>
<protein>
    <recommendedName>
        <fullName>Protein PHLOEM PROTEIN 2-LIKE A9</fullName>
        <shortName>AtPP2-A9</shortName>
    </recommendedName>
</protein>
<sequence>MSSQKSSHHKADSKMEQDNNRKAWISQPSGLNFVWGGDSRYWVIPKEPRMPAELKMVSWLEVTGSFDKIEPGKTYRIGFKISFKPDATGWDKAPVFMSAKIGKKGKTVWKRIKSVSQNFGILKGGSEPVNIPDESDGLFEILVSPTALNQDTKLQFGLYEVWTGRWKTGLLIHEAFVQEV</sequence>
<gene>
    <name type="primary">PP2A9</name>
    <name type="ordered locus">At1g31200</name>
    <name type="ORF">F28K20.16</name>
</gene>
<dbReference type="EMBL" id="AC004793">
    <property type="protein sequence ID" value="AAD21686.1"/>
    <property type="molecule type" value="Genomic_DNA"/>
</dbReference>
<dbReference type="EMBL" id="CP002684">
    <property type="status" value="NOT_ANNOTATED_CDS"/>
    <property type="molecule type" value="Genomic_DNA"/>
</dbReference>
<dbReference type="PIR" id="B86438">
    <property type="entry name" value="B86438"/>
</dbReference>
<dbReference type="SMR" id="Q9SA16"/>
<dbReference type="STRING" id="3702.Q9SA16"/>
<dbReference type="PaxDb" id="3702-AT1G31200.1"/>
<dbReference type="Araport" id="AT1G31200"/>
<dbReference type="TAIR" id="AT1G31200">
    <property type="gene designation" value="PP2-A9"/>
</dbReference>
<dbReference type="eggNOG" id="ENOG502S5SE">
    <property type="taxonomic scope" value="Eukaryota"/>
</dbReference>
<dbReference type="HOGENOM" id="CLU_050973_5_0_1"/>
<dbReference type="InParanoid" id="Q9SA16"/>
<dbReference type="PhylomeDB" id="Q9SA16"/>
<dbReference type="PRO" id="PR:Q9SA16"/>
<dbReference type="Proteomes" id="UP000006548">
    <property type="component" value="Chromosome 1"/>
</dbReference>
<dbReference type="ExpressionAtlas" id="Q9SA16">
    <property type="expression patterns" value="baseline and differential"/>
</dbReference>
<dbReference type="GO" id="GO:0030246">
    <property type="term" value="F:carbohydrate binding"/>
    <property type="evidence" value="ECO:0000250"/>
    <property type="project" value="TAIR"/>
</dbReference>
<dbReference type="InterPro" id="IPR025886">
    <property type="entry name" value="PP2-like"/>
</dbReference>
<dbReference type="PANTHER" id="PTHR32278">
    <property type="entry name" value="F-BOX DOMAIN-CONTAINING PROTEIN"/>
    <property type="match status" value="1"/>
</dbReference>
<dbReference type="PANTHER" id="PTHR32278:SF2">
    <property type="entry name" value="PROTEIN PHLOEM PROTEIN 2-LIKE A9"/>
    <property type="match status" value="1"/>
</dbReference>
<dbReference type="Pfam" id="PF14299">
    <property type="entry name" value="PP2"/>
    <property type="match status" value="1"/>
</dbReference>
<name>P2A09_ARATH</name>
<feature type="chain" id="PRO_0000285284" description="Protein PHLOEM PROTEIN 2-LIKE A9">
    <location>
        <begin position="1"/>
        <end position="180"/>
    </location>
</feature>
<feature type="region of interest" description="Disordered" evidence="1">
    <location>
        <begin position="1"/>
        <end position="21"/>
    </location>
</feature>
<feature type="compositionally biased region" description="Basic and acidic residues" evidence="1">
    <location>
        <begin position="9"/>
        <end position="21"/>
    </location>
</feature>